<organism>
    <name type="scientific">Xenopus laevis</name>
    <name type="common">African clawed frog</name>
    <dbReference type="NCBI Taxonomy" id="8355"/>
    <lineage>
        <taxon>Eukaryota</taxon>
        <taxon>Metazoa</taxon>
        <taxon>Chordata</taxon>
        <taxon>Craniata</taxon>
        <taxon>Vertebrata</taxon>
        <taxon>Euteleostomi</taxon>
        <taxon>Amphibia</taxon>
        <taxon>Batrachia</taxon>
        <taxon>Anura</taxon>
        <taxon>Pipoidea</taxon>
        <taxon>Pipidae</taxon>
        <taxon>Xenopodinae</taxon>
        <taxon>Xenopus</taxon>
        <taxon>Xenopus</taxon>
    </lineage>
</organism>
<keyword id="KW-0966">Cell projection</keyword>
<keyword id="KW-0970">Cilium biogenesis/degradation</keyword>
<keyword id="KW-0963">Cytoplasm</keyword>
<keyword id="KW-0206">Cytoskeleton</keyword>
<keyword id="KW-1185">Reference proteome</keyword>
<reference key="1">
    <citation type="submission" date="2005-06" db="EMBL/GenBank/DDBJ databases">
        <authorList>
            <consortium name="NIH - Xenopus Gene Collection (XGC) project"/>
        </authorList>
    </citation>
    <scope>NUCLEOTIDE SEQUENCE [LARGE SCALE MRNA]</scope>
    <source>
        <tissue>Egg</tissue>
    </source>
</reference>
<name>CEP20_XENLA</name>
<accession>Q4V7R8</accession>
<evidence type="ECO:0000250" key="1"/>
<evidence type="ECO:0000250" key="2">
    <source>
        <dbReference type="UniProtKB" id="Q96NB1"/>
    </source>
</evidence>
<evidence type="ECO:0000255" key="3">
    <source>
        <dbReference type="PROSITE-ProRule" id="PRU00126"/>
    </source>
</evidence>
<evidence type="ECO:0000256" key="4">
    <source>
        <dbReference type="SAM" id="MobiDB-lite"/>
    </source>
</evidence>
<evidence type="ECO:0000305" key="5"/>
<sequence>MATVGDLKAVVKDTLEKRGVMGQLKARVRAEVFEALDDRSEPKPVLSPENLLINELIREYLAFNKYSYTSSVLTAETGLSEVPLDRSFLTKELNVVEDLNSQSVPILYGIVAHFLKEHEDGPCQKVEKVSTENHTFRNIPRGRNTKDTHSGPVQLTQTSTEDWHQRRHR</sequence>
<comment type="function">
    <text evidence="2">Involved in the biogenesis of cilia (By similarity). Required for the recruitment of PLK1 to centrosomes and S phase progression (By similarity).</text>
</comment>
<comment type="subunit">
    <text evidence="1">Homooligomer; probably required for localization to centrosomes.</text>
</comment>
<comment type="subcellular location">
    <subcellularLocation>
        <location evidence="1">Cell projection</location>
        <location evidence="1">Cilium</location>
    </subcellularLocation>
    <subcellularLocation>
        <location evidence="1">Cytoplasm</location>
        <location evidence="1">Cytoskeleton</location>
        <location evidence="1">Cilium basal body</location>
    </subcellularLocation>
    <subcellularLocation>
        <location evidence="1">Cytoplasm</location>
        <location evidence="1">Cytoskeleton</location>
        <location evidence="1">Microtubule organizing center</location>
        <location evidence="1">Centrosome</location>
    </subcellularLocation>
    <subcellularLocation>
        <location evidence="1">Cytoplasmic granule</location>
    </subcellularLocation>
    <subcellularLocation>
        <location evidence="1">Cytoplasm</location>
        <location evidence="1">Cytoskeleton</location>
        <location evidence="1">Microtubule organizing center</location>
        <location evidence="1">Centrosome</location>
        <location evidence="1">Centriolar satellite</location>
    </subcellularLocation>
</comment>
<comment type="similarity">
    <text evidence="5">Belongs to the CEP43 family.</text>
</comment>
<proteinExistence type="evidence at transcript level"/>
<dbReference type="EMBL" id="BC097754">
    <property type="protein sequence ID" value="AAH97754.1"/>
    <property type="molecule type" value="mRNA"/>
</dbReference>
<dbReference type="RefSeq" id="NP_001090045.1">
    <property type="nucleotide sequence ID" value="NM_001096576.1"/>
</dbReference>
<dbReference type="SMR" id="Q4V7R8"/>
<dbReference type="DNASU" id="735118"/>
<dbReference type="GeneID" id="735118"/>
<dbReference type="KEGG" id="xla:735118"/>
<dbReference type="AGR" id="Xenbase:XB-GENE-6254288"/>
<dbReference type="CTD" id="735118"/>
<dbReference type="Xenbase" id="XB-GENE-6254288">
    <property type="gene designation" value="cep20.L"/>
</dbReference>
<dbReference type="OrthoDB" id="5970631at2759"/>
<dbReference type="Proteomes" id="UP000186698">
    <property type="component" value="Chromosome 9_10L"/>
</dbReference>
<dbReference type="Bgee" id="735118">
    <property type="expression patterns" value="Expressed in egg cell and 19 other cell types or tissues"/>
</dbReference>
<dbReference type="GO" id="GO:0034451">
    <property type="term" value="C:centriolar satellite"/>
    <property type="evidence" value="ECO:0000250"/>
    <property type="project" value="UniProtKB"/>
</dbReference>
<dbReference type="GO" id="GO:0005813">
    <property type="term" value="C:centrosome"/>
    <property type="evidence" value="ECO:0000318"/>
    <property type="project" value="GO_Central"/>
</dbReference>
<dbReference type="GO" id="GO:0036064">
    <property type="term" value="C:ciliary basal body"/>
    <property type="evidence" value="ECO:0000250"/>
    <property type="project" value="UniProtKB"/>
</dbReference>
<dbReference type="GO" id="GO:0005737">
    <property type="term" value="C:cytoplasm"/>
    <property type="evidence" value="ECO:0007669"/>
    <property type="project" value="UniProtKB-KW"/>
</dbReference>
<dbReference type="GO" id="GO:0031514">
    <property type="term" value="C:motile cilium"/>
    <property type="evidence" value="ECO:0000250"/>
    <property type="project" value="UniProtKB"/>
</dbReference>
<dbReference type="GO" id="GO:0060271">
    <property type="term" value="P:cilium assembly"/>
    <property type="evidence" value="ECO:0000250"/>
    <property type="project" value="UniProtKB"/>
</dbReference>
<dbReference type="GO" id="GO:0034453">
    <property type="term" value="P:microtubule anchoring"/>
    <property type="evidence" value="ECO:0007669"/>
    <property type="project" value="InterPro"/>
</dbReference>
<dbReference type="FunFam" id="1.20.960.40:FF:000002">
    <property type="entry name" value="LisH domain-containing protein FOPNL"/>
    <property type="match status" value="1"/>
</dbReference>
<dbReference type="Gene3D" id="1.20.960.40">
    <property type="match status" value="1"/>
</dbReference>
<dbReference type="InterPro" id="IPR018993">
    <property type="entry name" value="FOP_dimerisation-dom_N"/>
</dbReference>
<dbReference type="InterPro" id="IPR006594">
    <property type="entry name" value="LisH"/>
</dbReference>
<dbReference type="PANTHER" id="PTHR15431:SF19">
    <property type="entry name" value="CENTROSOMAL PROTEIN 20-RELATED"/>
    <property type="match status" value="1"/>
</dbReference>
<dbReference type="PANTHER" id="PTHR15431">
    <property type="entry name" value="FGFR1 ONCOGENE PARTNER/LISH DOMAIN-CONTAINING PROTEIN"/>
    <property type="match status" value="1"/>
</dbReference>
<dbReference type="Pfam" id="PF09398">
    <property type="entry name" value="FOP_dimer"/>
    <property type="match status" value="1"/>
</dbReference>
<dbReference type="PROSITE" id="PS50896">
    <property type="entry name" value="LISH"/>
    <property type="match status" value="1"/>
</dbReference>
<feature type="chain" id="PRO_0000264468" description="Centrosomal protein 20">
    <location>
        <begin position="1"/>
        <end position="169"/>
    </location>
</feature>
<feature type="domain" description="LisH" evidence="3">
    <location>
        <begin position="49"/>
        <end position="81"/>
    </location>
</feature>
<feature type="region of interest" description="Necessary and sufficient for homooligomerization and localization to centrosomes and pericentriolar satellites" evidence="1">
    <location>
        <begin position="1"/>
        <end position="104"/>
    </location>
</feature>
<feature type="region of interest" description="Disordered" evidence="4">
    <location>
        <begin position="135"/>
        <end position="169"/>
    </location>
</feature>
<feature type="compositionally biased region" description="Polar residues" evidence="4">
    <location>
        <begin position="151"/>
        <end position="160"/>
    </location>
</feature>
<gene>
    <name type="primary">Cep20</name>
    <name type="synonym">Fopnl</name>
</gene>
<protein>
    <recommendedName>
        <fullName evidence="5">Centrosomal protein 20</fullName>
    </recommendedName>
    <alternativeName>
        <fullName>FGFR1OP N-terminal-like protein</fullName>
    </alternativeName>
    <alternativeName>
        <fullName>LisH domain-containing protein FOPNL</fullName>
    </alternativeName>
</protein>